<name>YCF4_THAPS</name>
<accession>A0T0U3</accession>
<geneLocation type="chloroplast"/>
<protein>
    <recommendedName>
        <fullName evidence="1">Photosystem I assembly protein Ycf4</fullName>
    </recommendedName>
</protein>
<proteinExistence type="inferred from homology"/>
<dbReference type="EMBL" id="EF067921">
    <property type="protein sequence ID" value="ABK20778.1"/>
    <property type="molecule type" value="Genomic_DNA"/>
</dbReference>
<dbReference type="RefSeq" id="YP_874555.1">
    <property type="nucleotide sequence ID" value="NC_008589.1"/>
</dbReference>
<dbReference type="STRING" id="35128.A0T0U3"/>
<dbReference type="PaxDb" id="35128-Thapsdraft1304"/>
<dbReference type="GeneID" id="4524865"/>
<dbReference type="eggNOG" id="ENOG502QWGG">
    <property type="taxonomic scope" value="Eukaryota"/>
</dbReference>
<dbReference type="InParanoid" id="A0T0U3"/>
<dbReference type="OMA" id="RFSNYWW"/>
<dbReference type="GO" id="GO:0009535">
    <property type="term" value="C:chloroplast thylakoid membrane"/>
    <property type="evidence" value="ECO:0007669"/>
    <property type="project" value="UniProtKB-SubCell"/>
</dbReference>
<dbReference type="GO" id="GO:0009522">
    <property type="term" value="C:photosystem I"/>
    <property type="evidence" value="ECO:0007669"/>
    <property type="project" value="InterPro"/>
</dbReference>
<dbReference type="GO" id="GO:0015979">
    <property type="term" value="P:photosynthesis"/>
    <property type="evidence" value="ECO:0007669"/>
    <property type="project" value="UniProtKB-UniRule"/>
</dbReference>
<dbReference type="HAMAP" id="MF_00437">
    <property type="entry name" value="Ycf4"/>
    <property type="match status" value="1"/>
</dbReference>
<dbReference type="InterPro" id="IPR003359">
    <property type="entry name" value="PSI_Ycf4_assembly"/>
</dbReference>
<dbReference type="NCBIfam" id="NF002712">
    <property type="entry name" value="PRK02542.1"/>
    <property type="match status" value="1"/>
</dbReference>
<dbReference type="PANTHER" id="PTHR33288">
    <property type="match status" value="1"/>
</dbReference>
<dbReference type="PANTHER" id="PTHR33288:SF4">
    <property type="entry name" value="PHOTOSYSTEM I ASSEMBLY PROTEIN YCF4"/>
    <property type="match status" value="1"/>
</dbReference>
<dbReference type="Pfam" id="PF02392">
    <property type="entry name" value="Ycf4"/>
    <property type="match status" value="1"/>
</dbReference>
<sequence>MQDQIRQEKIVGSRRFSNYFWASLLLVGGLMFLLAGISSYLKINLLPFANTTELVFIPQGIVMMFYGTLSFGLSIYIMATLFWDIGSGYNEYNKVENLVKVVRRGFPGKNREILLTYPLNNIRSIGIKISEGLNPQRIIYLCLKDERKIPLTPVQQPDSISDLEDQAADLAKFLDLKLENL</sequence>
<comment type="function">
    <text evidence="1">Seems to be required for the assembly of the photosystem I complex.</text>
</comment>
<comment type="subcellular location">
    <subcellularLocation>
        <location evidence="1">Plastid</location>
        <location evidence="1">Chloroplast thylakoid membrane</location>
        <topology evidence="1">Multi-pass membrane protein</topology>
    </subcellularLocation>
</comment>
<comment type="similarity">
    <text evidence="1">Belongs to the Ycf4 family.</text>
</comment>
<evidence type="ECO:0000255" key="1">
    <source>
        <dbReference type="HAMAP-Rule" id="MF_00437"/>
    </source>
</evidence>
<keyword id="KW-0150">Chloroplast</keyword>
<keyword id="KW-0472">Membrane</keyword>
<keyword id="KW-0602">Photosynthesis</keyword>
<keyword id="KW-0934">Plastid</keyword>
<keyword id="KW-0793">Thylakoid</keyword>
<keyword id="KW-0812">Transmembrane</keyword>
<keyword id="KW-1133">Transmembrane helix</keyword>
<feature type="chain" id="PRO_0000275681" description="Photosystem I assembly protein Ycf4">
    <location>
        <begin position="1"/>
        <end position="181"/>
    </location>
</feature>
<feature type="transmembrane region" description="Helical" evidence="1">
    <location>
        <begin position="19"/>
        <end position="39"/>
    </location>
</feature>
<feature type="transmembrane region" description="Helical" evidence="1">
    <location>
        <begin position="61"/>
        <end position="81"/>
    </location>
</feature>
<organism>
    <name type="scientific">Thalassiosira pseudonana</name>
    <name type="common">Marine diatom</name>
    <name type="synonym">Cyclotella nana</name>
    <dbReference type="NCBI Taxonomy" id="35128"/>
    <lineage>
        <taxon>Eukaryota</taxon>
        <taxon>Sar</taxon>
        <taxon>Stramenopiles</taxon>
        <taxon>Ochrophyta</taxon>
        <taxon>Bacillariophyta</taxon>
        <taxon>Coscinodiscophyceae</taxon>
        <taxon>Thalassiosirophycidae</taxon>
        <taxon>Thalassiosirales</taxon>
        <taxon>Thalassiosiraceae</taxon>
        <taxon>Thalassiosira</taxon>
    </lineage>
</organism>
<gene>
    <name evidence="1" type="primary">ycf4</name>
</gene>
<reference key="1">
    <citation type="journal article" date="2007" name="Mol. Genet. Genomics">
        <title>Chloroplast genomes of the diatoms Phaeodactylum tricornutum and Thalassiosira pseudonana: comparison with other plastid genomes of the red lineage.</title>
        <authorList>
            <person name="Oudot-Le Secq M.-P."/>
            <person name="Grimwood J."/>
            <person name="Shapiro H."/>
            <person name="Armbrust E.V."/>
            <person name="Bowler C."/>
            <person name="Green B.R."/>
        </authorList>
    </citation>
    <scope>NUCLEOTIDE SEQUENCE [LARGE SCALE GENOMIC DNA]</scope>
    <source>
        <strain>CCMP1335 / NEPCC58 / CCAP 1085/12</strain>
    </source>
</reference>